<gene>
    <name type="primary">MCM</name>
    <name type="ordered locus">SSO0774</name>
</gene>
<reference key="1">
    <citation type="journal article" date="2000" name="Genome">
        <title>Gene content and organization of a 281-kbp contig from the genome of the extremely thermophilic archaeon, Sulfolobus solfataricus P2.</title>
        <authorList>
            <person name="Charlebois R.L."/>
            <person name="Singh R.K."/>
            <person name="Chan-Weiher C.C.-Y."/>
            <person name="Allard G."/>
            <person name="Chow C."/>
            <person name="Confalonieri F."/>
            <person name="Curtis B."/>
            <person name="Duguet M."/>
            <person name="Erauso G."/>
            <person name="Faguy D."/>
            <person name="Gaasterland T."/>
            <person name="Garrett R.A."/>
            <person name="Gordon P."/>
            <person name="Jeffries A.C."/>
            <person name="Kozera C."/>
            <person name="Kushwaha N."/>
            <person name="Lafleur E."/>
            <person name="Medina N."/>
            <person name="Peng X."/>
            <person name="Penny S.L."/>
            <person name="She Q."/>
            <person name="St Jean A."/>
            <person name="van der Oost J."/>
            <person name="Young F."/>
            <person name="Zivanovic Y."/>
            <person name="Doolittle W.F."/>
            <person name="Ragan M.A."/>
            <person name="Sensen C.W."/>
        </authorList>
    </citation>
    <scope>NUCLEOTIDE SEQUENCE [LARGE SCALE GENOMIC DNA]</scope>
    <source>
        <strain>ATCC 35092 / DSM 1617 / JCM 11322 / P2</strain>
    </source>
</reference>
<reference key="2">
    <citation type="journal article" date="2001" name="Proc. Natl. Acad. Sci. U.S.A.">
        <title>The complete genome of the crenarchaeon Sulfolobus solfataricus P2.</title>
        <authorList>
            <person name="She Q."/>
            <person name="Singh R.K."/>
            <person name="Confalonieri F."/>
            <person name="Zivanovic Y."/>
            <person name="Allard G."/>
            <person name="Awayez M.J."/>
            <person name="Chan-Weiher C.C.-Y."/>
            <person name="Clausen I.G."/>
            <person name="Curtis B.A."/>
            <person name="De Moors A."/>
            <person name="Erauso G."/>
            <person name="Fletcher C."/>
            <person name="Gordon P.M.K."/>
            <person name="Heikamp-de Jong I."/>
            <person name="Jeffries A.C."/>
            <person name="Kozera C.J."/>
            <person name="Medina N."/>
            <person name="Peng X."/>
            <person name="Thi-Ngoc H.P."/>
            <person name="Redder P."/>
            <person name="Schenk M.E."/>
            <person name="Theriault C."/>
            <person name="Tolstrup N."/>
            <person name="Charlebois R.L."/>
            <person name="Doolittle W.F."/>
            <person name="Duguet M."/>
            <person name="Gaasterland T."/>
            <person name="Garrett R.A."/>
            <person name="Ragan M.A."/>
            <person name="Sensen C.W."/>
            <person name="Van der Oost J."/>
        </authorList>
    </citation>
    <scope>NUCLEOTIDE SEQUENCE [LARGE SCALE GENOMIC DNA]</scope>
    <source>
        <strain>ATCC 35092 / DSM 1617 / JCM 11322 / P2</strain>
    </source>
</reference>
<reference key="3">
    <citation type="journal article" date="2002" name="J. Biol. Chem.">
        <title>Physical and functional interaction between the mini-chromosome maintenance-like DNA helicase and the single-stranded DNA binding protein from the crenarchaeon Sulfolobus solfataricus.</title>
        <authorList>
            <person name="Carpentieri F."/>
            <person name="De Felice M."/>
            <person name="De Falco M."/>
            <person name="Rossi M."/>
            <person name="Pisani F.M."/>
        </authorList>
    </citation>
    <scope>FUNCTION</scope>
    <scope>MUTAGENESIS OF LYS-346</scope>
</reference>
<reference key="4">
    <citation type="journal article" date="2007" name="Mol. Cell">
        <title>ATPase site architecture and helicase mechanism of an archaeal MCM.</title>
        <authorList>
            <person name="Moreau M.J."/>
            <person name="McGeoch A.T."/>
            <person name="Lowe A.R."/>
            <person name="Itzhaki L.S."/>
            <person name="Bell S.D."/>
        </authorList>
    </citation>
    <scope>CATALYTIC ACTIVITY</scope>
    <scope>MUTAGENESIS OF PHE-318; ARG-331; LYS-346; ARG-359; LYS-366; THR-374; ASP-404; 423-GLN-GLN-424; ASN-448; ARG-473; ASP-488 AND ARG-560</scope>
</reference>
<reference key="5">
    <citation type="journal article" date="2008" name="Nucleic Acids Res.">
        <title>Structural analysis of the Sulfolobus solfataricus MCM protein N-terminal domain.</title>
        <authorList>
            <person name="Liu W."/>
            <person name="Pucci B."/>
            <person name="Rossi M."/>
            <person name="Pisani F.M."/>
            <person name="Ladenstein R."/>
        </authorList>
    </citation>
    <scope>X-RAY CRYSTALLOGRAPHY (2.8 ANGSTROMS) OF 1-268</scope>
    <scope>SUBUNIT</scope>
</reference>
<reference key="6">
    <citation type="journal article" date="2008" name="Proc. Natl. Acad. Sci. U.S.A.">
        <title>Crystal structure of a near-full-length archaeal MCM: functional insights for an AAA+ hexameric helicase.</title>
        <authorList>
            <person name="Brewster A.S."/>
            <person name="Wang G."/>
            <person name="Yu X."/>
            <person name="Greenleaf W.B."/>
            <person name="Carazo J.M."/>
            <person name="Tjajadia M."/>
            <person name="Klein M.G."/>
            <person name="Chen X.S."/>
        </authorList>
    </citation>
    <scope>X-RAY CRYSTALLOGRAPHY (4.35 ANGSTROMS) OF 7-601</scope>
    <scope>CATALYTIC ACTIVITY</scope>
    <scope>SUBUNIT</scope>
    <scope>MUTAGENESIS OF LEU-189; ASP-191; 202-GLU--VAL-204; 326-GLU-ASP-327; ARG-329; ALA-416; ALA-420; 550-THR--PRO-554 AND 555-ILE--ASP-557</scope>
</reference>
<proteinExistence type="evidence at protein level"/>
<protein>
    <recommendedName>
        <fullName>Minichromosome maintenance protein MCM</fullName>
        <ecNumber>3.6.4.12</ecNumber>
    </recommendedName>
</protein>
<feature type="chain" id="PRO_0000194128" description="Minichromosome maintenance protein MCM">
    <location>
        <begin position="1"/>
        <end position="686"/>
    </location>
</feature>
<feature type="domain" description="MCM">
    <location>
        <begin position="291"/>
        <end position="495"/>
    </location>
</feature>
<feature type="short sequence motif" description="Arginine finger">
    <location>
        <begin position="472"/>
        <end position="475"/>
    </location>
</feature>
<feature type="binding site" evidence="1">
    <location>
        <begin position="340"/>
        <end position="347"/>
    </location>
    <ligand>
        <name>ATP</name>
        <dbReference type="ChEBI" id="CHEBI:30616"/>
    </ligand>
</feature>
<feature type="mutagenesis site" description="Predominantly monomeric and loss of helicase activity; when associated with R-191." evidence="5">
    <original>L</original>
    <variation>D</variation>
    <location>
        <position position="189"/>
    </location>
</feature>
<feature type="mutagenesis site" description="Predominantly monomeric and loss of helicase activity; when associated with D-189." evidence="5">
    <original>D</original>
    <variation>R</variation>
    <location>
        <position position="191"/>
    </location>
</feature>
<feature type="mutagenesis site" description="Loss of helicase activity." evidence="5">
    <original>EEV</original>
    <variation>GGG</variation>
    <location>
        <begin position="202"/>
        <end position="204"/>
    </location>
</feature>
<feature type="mutagenesis site" description="No effect on helicase and ATPase activity." evidence="3">
    <original>F</original>
    <variation>A</variation>
    <location>
        <position position="318"/>
    </location>
</feature>
<feature type="mutagenesis site" description="Impairs helicase activity; when associated with A-329." evidence="5">
    <original>ED</original>
    <variation>AA</variation>
    <location>
        <begin position="326"/>
        <end position="327"/>
    </location>
</feature>
<feature type="mutagenesis site" description="Impairs helicase activity; when associated with 326-A-A-327." evidence="5">
    <original>R</original>
    <variation>A</variation>
    <location>
        <position position="329"/>
    </location>
</feature>
<feature type="mutagenesis site" description="Loss of helicase and ATPase activity." evidence="3">
    <original>R</original>
    <variation>A</variation>
    <location>
        <position position="331"/>
    </location>
</feature>
<feature type="mutagenesis site" description="Loss of helicase and ATPase activity." evidence="2 3">
    <original>K</original>
    <variation>A</variation>
    <location>
        <position position="346"/>
    </location>
</feature>
<feature type="mutagenesis site" description="Sharp decrease in ATPase activity. Almost devoid of helicase activity." evidence="2 3">
    <original>K</original>
    <variation>A</variation>
    <location>
        <position position="346"/>
    </location>
</feature>
<feature type="mutagenesis site" description="Loss of helicase and reduction of ATPase activity." evidence="3">
    <original>R</original>
    <variation>A</variation>
    <location>
        <position position="359"/>
    </location>
</feature>
<feature type="mutagenesis site" description="Loss of helicase and reduction of ATPase activity." evidence="3">
    <original>K</original>
    <variation>E</variation>
    <location>
        <position position="366"/>
    </location>
</feature>
<feature type="mutagenesis site" description="Reduction of helicase and gain of ATPase activity." evidence="3">
    <original>T</original>
    <variation>E</variation>
    <location>
        <position position="374"/>
    </location>
</feature>
<feature type="mutagenesis site" description="Loss of helicase and ATPase activity." evidence="3">
    <original>D</original>
    <variation>A</variation>
    <location>
        <position position="404"/>
    </location>
</feature>
<feature type="mutagenesis site" description="Predominantly monomeric and loss of helicase activity; when associated with R-420." evidence="5">
    <original>A</original>
    <variation>R</variation>
    <location>
        <position position="416"/>
    </location>
</feature>
<feature type="mutagenesis site" description="Predominantly monomeric and loss of helicase activity; when associated with R-416." evidence="5">
    <original>A</original>
    <variation>R</variation>
    <location>
        <position position="420"/>
    </location>
</feature>
<feature type="mutagenesis site" description="Loss of helicase and ATPase activity." evidence="3">
    <original>QQ</original>
    <variation>AA</variation>
    <location>
        <begin position="423"/>
        <end position="424"/>
    </location>
</feature>
<feature type="mutagenesis site" description="Loss of helicase and ATPase activity." evidence="3">
    <original>N</original>
    <variation>A</variation>
    <location>
        <position position="448"/>
    </location>
</feature>
<feature type="mutagenesis site" description="Loss of helicase and ATPase activity." evidence="3">
    <original>R</original>
    <variation>A</variation>
    <location>
        <position position="473"/>
    </location>
</feature>
<feature type="mutagenesis site" description="No effect on helicase and reduction of ATPase activity." evidence="3">
    <original>D</original>
    <variation>A</variation>
    <location>
        <position position="488"/>
    </location>
</feature>
<feature type="mutagenesis site" description="Predominantly monomeric and loss of helicase activity." evidence="5">
    <original>TPDSP</original>
    <variation>GGGGG</variation>
    <location>
        <begin position="550"/>
        <end position="554"/>
    </location>
</feature>
<feature type="mutagenesis site" description="Exclusively monomeric and loss of helicase activity, ATPase activity and DNA binding." evidence="5">
    <original>ILI</original>
    <variation>DSD</variation>
    <location>
        <begin position="555"/>
        <end position="557"/>
    </location>
</feature>
<feature type="mutagenesis site" description="Loss of helicase and ATPase activity." evidence="3">
    <original>R</original>
    <variation>A</variation>
    <location>
        <position position="560"/>
    </location>
</feature>
<feature type="helix" evidence="9">
    <location>
        <begin position="10"/>
        <end position="20"/>
    </location>
</feature>
<feature type="strand" evidence="8">
    <location>
        <begin position="24"/>
        <end position="27"/>
    </location>
</feature>
<feature type="helix" evidence="9">
    <location>
        <begin position="29"/>
        <end position="39"/>
    </location>
</feature>
<feature type="strand" evidence="9">
    <location>
        <begin position="44"/>
        <end position="48"/>
    </location>
</feature>
<feature type="helix" evidence="9">
    <location>
        <begin position="49"/>
        <end position="55"/>
    </location>
</feature>
<feature type="helix" evidence="9">
    <location>
        <begin position="57"/>
        <end position="65"/>
    </location>
</feature>
<feature type="helix" evidence="9">
    <location>
        <begin position="67"/>
        <end position="85"/>
    </location>
</feature>
<feature type="helix" evidence="9">
    <location>
        <begin position="89"/>
        <end position="92"/>
    </location>
</feature>
<feature type="strand" evidence="9">
    <location>
        <begin position="97"/>
        <end position="102"/>
    </location>
</feature>
<feature type="helix" evidence="9">
    <location>
        <begin position="109"/>
        <end position="111"/>
    </location>
</feature>
<feature type="helix" evidence="9">
    <location>
        <begin position="114"/>
        <end position="116"/>
    </location>
</feature>
<feature type="strand" evidence="9">
    <location>
        <begin position="119"/>
        <end position="130"/>
    </location>
</feature>
<feature type="strand" evidence="9">
    <location>
        <begin position="134"/>
        <end position="146"/>
    </location>
</feature>
<feature type="turn" evidence="9">
    <location>
        <begin position="147"/>
        <end position="149"/>
    </location>
</feature>
<feature type="strand" evidence="9">
    <location>
        <begin position="152"/>
        <end position="159"/>
    </location>
</feature>
<feature type="turn" evidence="9">
    <location>
        <begin position="172"/>
        <end position="174"/>
    </location>
</feature>
<feature type="strand" evidence="9">
    <location>
        <begin position="179"/>
        <end position="182"/>
    </location>
</feature>
<feature type="helix" evidence="8">
    <location>
        <begin position="184"/>
        <end position="186"/>
    </location>
</feature>
<feature type="strand" evidence="9">
    <location>
        <begin position="188"/>
        <end position="198"/>
    </location>
</feature>
<feature type="helix" evidence="9">
    <location>
        <begin position="201"/>
        <end position="203"/>
    </location>
</feature>
<feature type="strand" evidence="9">
    <location>
        <begin position="212"/>
        <end position="218"/>
    </location>
</feature>
<feature type="helix" evidence="9">
    <location>
        <begin position="219"/>
        <end position="221"/>
    </location>
</feature>
<feature type="strand" evidence="9">
    <location>
        <begin position="230"/>
        <end position="239"/>
    </location>
</feature>
<feature type="strand" evidence="9">
    <location>
        <begin position="255"/>
        <end position="265"/>
    </location>
</feature>
<feature type="helix" evidence="7">
    <location>
        <begin position="612"/>
        <end position="615"/>
    </location>
</feature>
<feature type="helix" evidence="7">
    <location>
        <begin position="621"/>
        <end position="637"/>
    </location>
</feature>
<feature type="strand" evidence="7">
    <location>
        <begin position="640"/>
        <end position="644"/>
    </location>
</feature>
<feature type="helix" evidence="7">
    <location>
        <begin position="645"/>
        <end position="655"/>
    </location>
</feature>
<feature type="helix" evidence="7">
    <location>
        <begin position="659"/>
        <end position="672"/>
    </location>
</feature>
<feature type="strand" evidence="7">
    <location>
        <begin position="674"/>
        <end position="679"/>
    </location>
</feature>
<feature type="strand" evidence="7">
    <location>
        <begin position="682"/>
        <end position="685"/>
    </location>
</feature>
<evidence type="ECO:0000255" key="1"/>
<evidence type="ECO:0000269" key="2">
    <source>
    </source>
</evidence>
<evidence type="ECO:0000269" key="3">
    <source>
    </source>
</evidence>
<evidence type="ECO:0000269" key="4">
    <source>
    </source>
</evidence>
<evidence type="ECO:0000269" key="5">
    <source>
    </source>
</evidence>
<evidence type="ECO:0000305" key="6"/>
<evidence type="ECO:0007829" key="7">
    <source>
        <dbReference type="PDB" id="2M45"/>
    </source>
</evidence>
<evidence type="ECO:0007829" key="8">
    <source>
        <dbReference type="PDB" id="2VL6"/>
    </source>
</evidence>
<evidence type="ECO:0007829" key="9">
    <source>
        <dbReference type="PDB" id="6WNZ"/>
    </source>
</evidence>
<accession>Q9UXG1</accession>
<comment type="function">
    <text evidence="2">Presumptive replicative helicase. Has ATPase and DNA helicase activities. The latter preferentially melts 5'-tailed oligonucleotides and is stimulated by the SSB protein (single-stranded DNA binding protein). The active ATPase sites in the MCM ring are formed through the interaction surfaces of two neighboring subunits such that a critical structure of a conserved arginine finger motif is provided in trans relative to the ATP-binding site of the Walker A box of the adjacent subunit. The helicase function is proposed to use a partially sequential mode of ATP hydrolysis; the complex appears to tolerate multiple catalytically inactive subunits.</text>
</comment>
<comment type="catalytic activity">
    <reaction evidence="3 5">
        <text>ATP + H2O = ADP + phosphate + H(+)</text>
        <dbReference type="Rhea" id="RHEA:13065"/>
        <dbReference type="ChEBI" id="CHEBI:15377"/>
        <dbReference type="ChEBI" id="CHEBI:15378"/>
        <dbReference type="ChEBI" id="CHEBI:30616"/>
        <dbReference type="ChEBI" id="CHEBI:43474"/>
        <dbReference type="ChEBI" id="CHEBI:456216"/>
        <dbReference type="EC" id="3.6.4.12"/>
    </reaction>
</comment>
<comment type="activity regulation">
    <text>Inhibited by the cdc6-2 protein. The ATPase activity is not stimulated in the presence of DNA molecules.</text>
</comment>
<comment type="subunit">
    <text evidence="4 5">Homohexamers. Forms a complex with SSB.</text>
</comment>
<comment type="interaction">
    <interactant intactId="EBI-8081298">
        <id>Q9UXG1</id>
    </interactant>
    <interactant intactId="EBI-8081298">
        <id>Q9UXG1</id>
        <label>MCM</label>
    </interactant>
    <organismsDiffer>false</organismsDiffer>
    <experiments>9</experiments>
</comment>
<comment type="interaction">
    <interactant intactId="EBI-8081298">
        <id>Q9UXG1</id>
    </interactant>
    <interactant intactId="EBI-8081318">
        <id>Q9UXG0</id>
        <label>ORF-c40_009</label>
    </interactant>
    <organismsDiffer>true</organismsDiffer>
    <experiments>5</experiments>
</comment>
<comment type="similarity">
    <text evidence="6">Belongs to the MCM family.</text>
</comment>
<organism>
    <name type="scientific">Saccharolobus solfataricus (strain ATCC 35092 / DSM 1617 / JCM 11322 / P2)</name>
    <name type="common">Sulfolobus solfataricus</name>
    <dbReference type="NCBI Taxonomy" id="273057"/>
    <lineage>
        <taxon>Archaea</taxon>
        <taxon>Thermoproteota</taxon>
        <taxon>Thermoprotei</taxon>
        <taxon>Sulfolobales</taxon>
        <taxon>Sulfolobaceae</taxon>
        <taxon>Saccharolobus</taxon>
    </lineage>
</organism>
<dbReference type="EC" id="3.6.4.12"/>
<dbReference type="EMBL" id="Y18930">
    <property type="protein sequence ID" value="CAB57529.1"/>
    <property type="molecule type" value="Genomic_DNA"/>
</dbReference>
<dbReference type="EMBL" id="AE006641">
    <property type="protein sequence ID" value="AAK41071.1"/>
    <property type="molecule type" value="Genomic_DNA"/>
</dbReference>
<dbReference type="PIR" id="H90226">
    <property type="entry name" value="H90226"/>
</dbReference>
<dbReference type="RefSeq" id="WP_009991364.1">
    <property type="nucleotide sequence ID" value="NC_002754.1"/>
</dbReference>
<dbReference type="PDB" id="2M45">
    <property type="method" value="NMR"/>
    <property type="chains" value="A=605-686"/>
</dbReference>
<dbReference type="PDB" id="2VL6">
    <property type="method" value="X-ray"/>
    <property type="resolution" value="2.80 A"/>
    <property type="chains" value="A/B/C=1-268"/>
</dbReference>
<dbReference type="PDB" id="3F9V">
    <property type="method" value="X-ray"/>
    <property type="resolution" value="4.35 A"/>
    <property type="chains" value="A=7-601"/>
</dbReference>
<dbReference type="PDB" id="4FDG">
    <property type="method" value="X-ray"/>
    <property type="resolution" value="4.10 A"/>
    <property type="chains" value="A/B/C/D/E=7-686"/>
</dbReference>
<dbReference type="PDB" id="4R7Y">
    <property type="method" value="X-ray"/>
    <property type="resolution" value="2.70 A"/>
    <property type="chains" value="A/B=2-269"/>
</dbReference>
<dbReference type="PDB" id="6WNZ">
    <property type="method" value="X-ray"/>
    <property type="resolution" value="2.00 A"/>
    <property type="chains" value="A/B=1-269"/>
</dbReference>
<dbReference type="PDB" id="8EAF">
    <property type="method" value="EM"/>
    <property type="resolution" value="2.62 A"/>
    <property type="chains" value="A/B/C/D/E/F=2-612"/>
</dbReference>
<dbReference type="PDB" id="8EAG">
    <property type="method" value="EM"/>
    <property type="resolution" value="3.01 A"/>
    <property type="chains" value="A/B/C/D/E/F=2-612"/>
</dbReference>
<dbReference type="PDB" id="8EAH">
    <property type="method" value="EM"/>
    <property type="resolution" value="2.48 A"/>
    <property type="chains" value="A/B/C/D/E/F=2-612"/>
</dbReference>
<dbReference type="PDB" id="8EAI">
    <property type="method" value="EM"/>
    <property type="resolution" value="2.76 A"/>
    <property type="chains" value="A/B/C/D/E/F=2-612"/>
</dbReference>
<dbReference type="PDB" id="8EAJ">
    <property type="method" value="EM"/>
    <property type="resolution" value="2.45 A"/>
    <property type="chains" value="A/B/C/D/E/F=2-612"/>
</dbReference>
<dbReference type="PDB" id="8EAK">
    <property type="method" value="EM"/>
    <property type="resolution" value="2.67 A"/>
    <property type="chains" value="A/B/C/D/E/F=2-612"/>
</dbReference>
<dbReference type="PDB" id="8EAL">
    <property type="method" value="EM"/>
    <property type="resolution" value="2.34 A"/>
    <property type="chains" value="A/B/C/D/E/F=2-612"/>
</dbReference>
<dbReference type="PDB" id="8EAM">
    <property type="method" value="EM"/>
    <property type="resolution" value="2.59 A"/>
    <property type="chains" value="A/B/C/D/E/F=2-612"/>
</dbReference>
<dbReference type="PDBsum" id="2M45"/>
<dbReference type="PDBsum" id="2VL6"/>
<dbReference type="PDBsum" id="3F9V"/>
<dbReference type="PDBsum" id="4FDG"/>
<dbReference type="PDBsum" id="4R7Y"/>
<dbReference type="PDBsum" id="6WNZ"/>
<dbReference type="PDBsum" id="8EAF"/>
<dbReference type="PDBsum" id="8EAG"/>
<dbReference type="PDBsum" id="8EAH"/>
<dbReference type="PDBsum" id="8EAI"/>
<dbReference type="PDBsum" id="8EAJ"/>
<dbReference type="PDBsum" id="8EAK"/>
<dbReference type="PDBsum" id="8EAL"/>
<dbReference type="PDBsum" id="8EAM"/>
<dbReference type="BMRB" id="Q9UXG1"/>
<dbReference type="EMDB" id="EMD-27974"/>
<dbReference type="EMDB" id="EMD-27975"/>
<dbReference type="EMDB" id="EMD-27976"/>
<dbReference type="EMDB" id="EMD-27977"/>
<dbReference type="EMDB" id="EMD-27978"/>
<dbReference type="EMDB" id="EMD-27979"/>
<dbReference type="EMDB" id="EMD-27980"/>
<dbReference type="EMDB" id="EMD-27981"/>
<dbReference type="SMR" id="Q9UXG1"/>
<dbReference type="DIP" id="DIP-42884N"/>
<dbReference type="FunCoup" id="Q9UXG1">
    <property type="interactions" value="163"/>
</dbReference>
<dbReference type="IntAct" id="Q9UXG1">
    <property type="interactions" value="1"/>
</dbReference>
<dbReference type="MINT" id="Q9UXG1"/>
<dbReference type="STRING" id="273057.SSO0774"/>
<dbReference type="PaxDb" id="273057-SSO0774"/>
<dbReference type="EnsemblBacteria" id="AAK41071">
    <property type="protein sequence ID" value="AAK41071"/>
    <property type="gene ID" value="SSO0774"/>
</dbReference>
<dbReference type="KEGG" id="sso:SSO0774"/>
<dbReference type="PATRIC" id="fig|273057.12.peg.774"/>
<dbReference type="eggNOG" id="arCOG00439">
    <property type="taxonomic scope" value="Archaea"/>
</dbReference>
<dbReference type="HOGENOM" id="CLU_000995_6_0_2"/>
<dbReference type="InParanoid" id="Q9UXG1"/>
<dbReference type="PhylomeDB" id="Q9UXG1"/>
<dbReference type="BRENDA" id="3.6.4.12">
    <property type="organism ID" value="6163"/>
</dbReference>
<dbReference type="EvolutionaryTrace" id="Q9UXG1"/>
<dbReference type="Proteomes" id="UP000001974">
    <property type="component" value="Chromosome"/>
</dbReference>
<dbReference type="GO" id="GO:0042555">
    <property type="term" value="C:MCM complex"/>
    <property type="evidence" value="ECO:0000318"/>
    <property type="project" value="GO_Central"/>
</dbReference>
<dbReference type="GO" id="GO:0005524">
    <property type="term" value="F:ATP binding"/>
    <property type="evidence" value="ECO:0007669"/>
    <property type="project" value="UniProtKB-KW"/>
</dbReference>
<dbReference type="GO" id="GO:0016887">
    <property type="term" value="F:ATP hydrolysis activity"/>
    <property type="evidence" value="ECO:0007669"/>
    <property type="project" value="InterPro"/>
</dbReference>
<dbReference type="GO" id="GO:0004386">
    <property type="term" value="F:helicase activity"/>
    <property type="evidence" value="ECO:0007669"/>
    <property type="project" value="UniProtKB-KW"/>
</dbReference>
<dbReference type="GO" id="GO:0042802">
    <property type="term" value="F:identical protein binding"/>
    <property type="evidence" value="ECO:0000353"/>
    <property type="project" value="IntAct"/>
</dbReference>
<dbReference type="GO" id="GO:0003697">
    <property type="term" value="F:single-stranded DNA binding"/>
    <property type="evidence" value="ECO:0000318"/>
    <property type="project" value="GO_Central"/>
</dbReference>
<dbReference type="GO" id="GO:0006260">
    <property type="term" value="P:DNA replication"/>
    <property type="evidence" value="ECO:0007669"/>
    <property type="project" value="UniProtKB-KW"/>
</dbReference>
<dbReference type="CDD" id="cd17761">
    <property type="entry name" value="MCM_arch"/>
    <property type="match status" value="1"/>
</dbReference>
<dbReference type="FunFam" id="1.10.10.10:FF:000630">
    <property type="entry name" value="DNA replication licensing factor (Mcm)"/>
    <property type="match status" value="1"/>
</dbReference>
<dbReference type="FunFam" id="3.40.50.300:FF:000826">
    <property type="entry name" value="Replicative DNA helicase Mcm"/>
    <property type="match status" value="1"/>
</dbReference>
<dbReference type="Gene3D" id="2.20.28.10">
    <property type="match status" value="1"/>
</dbReference>
<dbReference type="Gene3D" id="3.30.1640.10">
    <property type="entry name" value="mini-chromosome maintenance (MCM) complex, chain A, domain 1"/>
    <property type="match status" value="1"/>
</dbReference>
<dbReference type="Gene3D" id="2.40.50.140">
    <property type="entry name" value="Nucleic acid-binding proteins"/>
    <property type="match status" value="1"/>
</dbReference>
<dbReference type="Gene3D" id="3.40.50.300">
    <property type="entry name" value="P-loop containing nucleotide triphosphate hydrolases"/>
    <property type="match status" value="1"/>
</dbReference>
<dbReference type="Gene3D" id="1.10.10.10">
    <property type="entry name" value="Winged helix-like DNA-binding domain superfamily/Winged helix DNA-binding domain"/>
    <property type="match status" value="1"/>
</dbReference>
<dbReference type="InterPro" id="IPR003593">
    <property type="entry name" value="AAA+_ATPase"/>
</dbReference>
<dbReference type="InterPro" id="IPR031327">
    <property type="entry name" value="MCM"/>
</dbReference>
<dbReference type="InterPro" id="IPR048908">
    <property type="entry name" value="MCM_C"/>
</dbReference>
<dbReference type="InterPro" id="IPR001208">
    <property type="entry name" value="MCM_dom"/>
</dbReference>
<dbReference type="InterPro" id="IPR041562">
    <property type="entry name" value="MCM_lid"/>
</dbReference>
<dbReference type="InterPro" id="IPR027925">
    <property type="entry name" value="MCM_N"/>
</dbReference>
<dbReference type="InterPro" id="IPR033762">
    <property type="entry name" value="MCM_OB"/>
</dbReference>
<dbReference type="InterPro" id="IPR012340">
    <property type="entry name" value="NA-bd_OB-fold"/>
</dbReference>
<dbReference type="InterPro" id="IPR027417">
    <property type="entry name" value="P-loop_NTPase"/>
</dbReference>
<dbReference type="InterPro" id="IPR036388">
    <property type="entry name" value="WH-like_DNA-bd_sf"/>
</dbReference>
<dbReference type="NCBIfam" id="NF040949">
    <property type="entry name" value="minchrom_main_MCM"/>
    <property type="match status" value="1"/>
</dbReference>
<dbReference type="PANTHER" id="PTHR11630">
    <property type="entry name" value="DNA REPLICATION LICENSING FACTOR MCM FAMILY MEMBER"/>
    <property type="match status" value="1"/>
</dbReference>
<dbReference type="PANTHER" id="PTHR11630:SF66">
    <property type="entry name" value="DNA REPLICATION LICENSING FACTOR MCM4"/>
    <property type="match status" value="1"/>
</dbReference>
<dbReference type="Pfam" id="PF00493">
    <property type="entry name" value="MCM"/>
    <property type="match status" value="1"/>
</dbReference>
<dbReference type="Pfam" id="PF21100">
    <property type="entry name" value="MCM_C"/>
    <property type="match status" value="1"/>
</dbReference>
<dbReference type="Pfam" id="PF17855">
    <property type="entry name" value="MCM_lid"/>
    <property type="match status" value="1"/>
</dbReference>
<dbReference type="Pfam" id="PF14551">
    <property type="entry name" value="MCM_N"/>
    <property type="match status" value="1"/>
</dbReference>
<dbReference type="Pfam" id="PF17207">
    <property type="entry name" value="MCM_OB"/>
    <property type="match status" value="1"/>
</dbReference>
<dbReference type="PRINTS" id="PR01657">
    <property type="entry name" value="MCMFAMILY"/>
</dbReference>
<dbReference type="SMART" id="SM00382">
    <property type="entry name" value="AAA"/>
    <property type="match status" value="1"/>
</dbReference>
<dbReference type="SMART" id="SM00350">
    <property type="entry name" value="MCM"/>
    <property type="match status" value="1"/>
</dbReference>
<dbReference type="SUPFAM" id="SSF50249">
    <property type="entry name" value="Nucleic acid-binding proteins"/>
    <property type="match status" value="1"/>
</dbReference>
<dbReference type="SUPFAM" id="SSF52540">
    <property type="entry name" value="P-loop containing nucleoside triphosphate hydrolases"/>
    <property type="match status" value="1"/>
</dbReference>
<dbReference type="PROSITE" id="PS50051">
    <property type="entry name" value="MCM_2"/>
    <property type="match status" value="1"/>
</dbReference>
<sequence>MEIPSKQIDYRDVFIEFLTTFKGNNNQNKYIERINELVAYRKKSLIIEFSDVLSFNENLAYEIINNTKIILPILEGALYDHILQLDPTYQRDIEKVHVRIVGIPRVIELRKIRSTDIGKLITIDGILVKVTPVKERIYKATYKHIHPDCMQEFEWPEDEEMPEVLEMPTICPKCGKPGQFRLIPEKTKLIDWQKAVIQERPEEVPSGQLPRQLEIILEDDLVDSARPGDRVKVTGILDIKQDSPVKRGSRAVFDIYMKVSSIEVSQKVLDEVIISEEDEKKIKDLAKDPWIRDRIISSIAPSIYGHWELKEALALALFGGVPKVLEDTRIRGDIHILIIGDPGTAKSQMLQFISRVAPRAVYTTGKGSTAAGLTAAVVREKGTGEYYLEAGALVLADGGIAVIDEIDKMRDEDRVAIHEAMEQQTVSIAKAGIVAKLNARAAVIAAGNPKFGRYISERPVSDNINLPPTILSRFDLIFILKDQPGEQDRELANYILDVHSGKSTKNIIDIDTLRKYIAYARKYVTPKITSEAKNLITDFFVEMRKKSSETPDSPILITPRQLEALIRISEAYAKMALKAEVTREDAERAINIMRLFLESVGVDMESGKIDIDTIMTGKPKSAREKMMKIIEIIDSLAVSSECAKVKDILKEAQQVGIEKSNIEKLLTDMRKSGIIYEAKPECYKKV</sequence>
<name>MCM_SACS2</name>
<keyword id="KW-0002">3D-structure</keyword>
<keyword id="KW-0067">ATP-binding</keyword>
<keyword id="KW-0235">DNA replication</keyword>
<keyword id="KW-0238">DNA-binding</keyword>
<keyword id="KW-0347">Helicase</keyword>
<keyword id="KW-0378">Hydrolase</keyword>
<keyword id="KW-0547">Nucleotide-binding</keyword>
<keyword id="KW-1185">Reference proteome</keyword>